<organism>
    <name type="scientific">Pseudomonas putida (strain ATCC 47054 / DSM 6125 / CFBP 8728 / NCIMB 11950 / KT2440)</name>
    <dbReference type="NCBI Taxonomy" id="160488"/>
    <lineage>
        <taxon>Bacteria</taxon>
        <taxon>Pseudomonadati</taxon>
        <taxon>Pseudomonadota</taxon>
        <taxon>Gammaproteobacteria</taxon>
        <taxon>Pseudomonadales</taxon>
        <taxon>Pseudomonadaceae</taxon>
        <taxon>Pseudomonas</taxon>
    </lineage>
</organism>
<proteinExistence type="inferred from homology"/>
<name>HISZ_PSEPK</name>
<keyword id="KW-0028">Amino-acid biosynthesis</keyword>
<keyword id="KW-0963">Cytoplasm</keyword>
<keyword id="KW-0368">Histidine biosynthesis</keyword>
<keyword id="KW-1185">Reference proteome</keyword>
<dbReference type="EMBL" id="AE015451">
    <property type="protein sequence ID" value="AAN70457.1"/>
    <property type="molecule type" value="Genomic_DNA"/>
</dbReference>
<dbReference type="RefSeq" id="NP_746993.1">
    <property type="nucleotide sequence ID" value="NC_002947.4"/>
</dbReference>
<dbReference type="RefSeq" id="WP_010955481.1">
    <property type="nucleotide sequence ID" value="NZ_CP169744.1"/>
</dbReference>
<dbReference type="SMR" id="Q88DD7"/>
<dbReference type="STRING" id="160488.PP_4890"/>
<dbReference type="PaxDb" id="160488-PP_4890"/>
<dbReference type="KEGG" id="ppu:PP_4890"/>
<dbReference type="PATRIC" id="fig|160488.4.peg.5225"/>
<dbReference type="eggNOG" id="COG3705">
    <property type="taxonomic scope" value="Bacteria"/>
</dbReference>
<dbReference type="HOGENOM" id="CLU_025113_0_1_6"/>
<dbReference type="OrthoDB" id="9769617at2"/>
<dbReference type="PhylomeDB" id="Q88DD7"/>
<dbReference type="BioCyc" id="PPUT160488:G1G01-5232-MONOMER"/>
<dbReference type="UniPathway" id="UPA00031">
    <property type="reaction ID" value="UER00006"/>
</dbReference>
<dbReference type="Proteomes" id="UP000000556">
    <property type="component" value="Chromosome"/>
</dbReference>
<dbReference type="GO" id="GO:0005737">
    <property type="term" value="C:cytoplasm"/>
    <property type="evidence" value="ECO:0007669"/>
    <property type="project" value="UniProtKB-SubCell"/>
</dbReference>
<dbReference type="GO" id="GO:0000105">
    <property type="term" value="P:L-histidine biosynthetic process"/>
    <property type="evidence" value="ECO:0007669"/>
    <property type="project" value="UniProtKB-UniRule"/>
</dbReference>
<dbReference type="CDD" id="cd00773">
    <property type="entry name" value="HisRS-like_core"/>
    <property type="match status" value="1"/>
</dbReference>
<dbReference type="Gene3D" id="3.30.930.10">
    <property type="entry name" value="Bira Bifunctional Protein, Domain 2"/>
    <property type="match status" value="1"/>
</dbReference>
<dbReference type="HAMAP" id="MF_00125">
    <property type="entry name" value="HisZ"/>
    <property type="match status" value="1"/>
</dbReference>
<dbReference type="InterPro" id="IPR045864">
    <property type="entry name" value="aa-tRNA-synth_II/BPL/LPL"/>
</dbReference>
<dbReference type="InterPro" id="IPR041715">
    <property type="entry name" value="HisRS-like_core"/>
</dbReference>
<dbReference type="InterPro" id="IPR004516">
    <property type="entry name" value="HisRS/HisZ"/>
</dbReference>
<dbReference type="InterPro" id="IPR004517">
    <property type="entry name" value="HisZ"/>
</dbReference>
<dbReference type="NCBIfam" id="TIGR00443">
    <property type="entry name" value="hisZ_biosyn_reg"/>
    <property type="match status" value="1"/>
</dbReference>
<dbReference type="NCBIfam" id="NF008935">
    <property type="entry name" value="PRK12292.1-1"/>
    <property type="match status" value="1"/>
</dbReference>
<dbReference type="NCBIfam" id="NF008937">
    <property type="entry name" value="PRK12292.1-4"/>
    <property type="match status" value="1"/>
</dbReference>
<dbReference type="NCBIfam" id="NF009086">
    <property type="entry name" value="PRK12421.1"/>
    <property type="match status" value="1"/>
</dbReference>
<dbReference type="PANTHER" id="PTHR11476:SF7">
    <property type="entry name" value="HISTIDINE--TRNA LIGASE"/>
    <property type="match status" value="1"/>
</dbReference>
<dbReference type="PANTHER" id="PTHR11476">
    <property type="entry name" value="HISTIDYL-TRNA SYNTHETASE"/>
    <property type="match status" value="1"/>
</dbReference>
<dbReference type="Pfam" id="PF13393">
    <property type="entry name" value="tRNA-synt_His"/>
    <property type="match status" value="1"/>
</dbReference>
<dbReference type="PIRSF" id="PIRSF001549">
    <property type="entry name" value="His-tRNA_synth"/>
    <property type="match status" value="1"/>
</dbReference>
<dbReference type="SUPFAM" id="SSF55681">
    <property type="entry name" value="Class II aaRS and biotin synthetases"/>
    <property type="match status" value="1"/>
</dbReference>
<evidence type="ECO:0000255" key="1">
    <source>
        <dbReference type="HAMAP-Rule" id="MF_00125"/>
    </source>
</evidence>
<comment type="function">
    <text evidence="1">Required for the first step of histidine biosynthesis. May allow the feedback regulation of ATP phosphoribosyltransferase activity by histidine.</text>
</comment>
<comment type="pathway">
    <text evidence="1">Amino-acid biosynthesis; L-histidine biosynthesis; L-histidine from 5-phospho-alpha-D-ribose 1-diphosphate: step 1/9.</text>
</comment>
<comment type="subunit">
    <text evidence="1">Heteromultimer composed of HisG and HisZ subunits.</text>
</comment>
<comment type="subcellular location">
    <subcellularLocation>
        <location evidence="1">Cytoplasm</location>
    </subcellularLocation>
</comment>
<comment type="miscellaneous">
    <text>This function is generally fulfilled by the C-terminal part of HisG, which is missing in some bacteria such as this one.</text>
</comment>
<comment type="similarity">
    <text evidence="1">Belongs to the class-II aminoacyl-tRNA synthetase family. HisZ subfamily.</text>
</comment>
<accession>Q88DD7</accession>
<feature type="chain" id="PRO_0000171053" description="ATP phosphoribosyltransferase regulatory subunit">
    <location>
        <begin position="1"/>
        <end position="395"/>
    </location>
</feature>
<protein>
    <recommendedName>
        <fullName evidence="1">ATP phosphoribosyltransferase regulatory subunit</fullName>
    </recommendedName>
</protein>
<gene>
    <name evidence="1" type="primary">hisZ</name>
    <name type="ordered locus">PP_4890</name>
</gene>
<reference key="1">
    <citation type="journal article" date="2002" name="Environ. Microbiol.">
        <title>Complete genome sequence and comparative analysis of the metabolically versatile Pseudomonas putida KT2440.</title>
        <authorList>
            <person name="Nelson K.E."/>
            <person name="Weinel C."/>
            <person name="Paulsen I.T."/>
            <person name="Dodson R.J."/>
            <person name="Hilbert H."/>
            <person name="Martins dos Santos V.A.P."/>
            <person name="Fouts D.E."/>
            <person name="Gill S.R."/>
            <person name="Pop M."/>
            <person name="Holmes M."/>
            <person name="Brinkac L.M."/>
            <person name="Beanan M.J."/>
            <person name="DeBoy R.T."/>
            <person name="Daugherty S.C."/>
            <person name="Kolonay J.F."/>
            <person name="Madupu R."/>
            <person name="Nelson W.C."/>
            <person name="White O."/>
            <person name="Peterson J.D."/>
            <person name="Khouri H.M."/>
            <person name="Hance I."/>
            <person name="Chris Lee P."/>
            <person name="Holtzapple E.K."/>
            <person name="Scanlan D."/>
            <person name="Tran K."/>
            <person name="Moazzez A."/>
            <person name="Utterback T.R."/>
            <person name="Rizzo M."/>
            <person name="Lee K."/>
            <person name="Kosack D."/>
            <person name="Moestl D."/>
            <person name="Wedler H."/>
            <person name="Lauber J."/>
            <person name="Stjepandic D."/>
            <person name="Hoheisel J."/>
            <person name="Straetz M."/>
            <person name="Heim S."/>
            <person name="Kiewitz C."/>
            <person name="Eisen J.A."/>
            <person name="Timmis K.N."/>
            <person name="Duesterhoeft A."/>
            <person name="Tuemmler B."/>
            <person name="Fraser C.M."/>
        </authorList>
    </citation>
    <scope>NUCLEOTIDE SEQUENCE [LARGE SCALE GENOMIC DNA]</scope>
    <source>
        <strain>ATCC 47054 / DSM 6125 / CFBP 8728 / NCIMB 11950 / KT2440</strain>
    </source>
</reference>
<sequence length="395" mass="42936">MATVDRWLLPDGIEEVLPPEAARIEIARRQVLDLFQSWGYELVVTPHIEYLESLLTGAGQDLDQRTFKVVDPQSGRLMGFRADFTPQVARIDAHTLRREGPSRLCYAGSVLHAQPRALSTSRSPIQLGAELYGDASPTSDVEVISLMLATLQLADVPDVHMDLGHVGIYRGLARAAGLSGAVEQQLFDAMQRKAVDEVQALTADLPKDLGSMLRALVELCGGREVLAEARVRLGRAPASVLAALDDLLAIADRLASRYPDLPLYFDLGELRGYHYHTGVVFAVFVPGEGQSIAQGGRYDDIGADFGRARPATGFSTDLKTLVTLGRAEVVLPTGGIWMPDSGDAALWQQVCQLRNEGQRVVQALPGQPLSAALEADCDRQLIQQDGRWQVLPLAQ</sequence>